<proteinExistence type="inferred from homology"/>
<evidence type="ECO:0000250" key="1"/>
<evidence type="ECO:0000255" key="2"/>
<evidence type="ECO:0000256" key="3">
    <source>
        <dbReference type="SAM" id="MobiDB-lite"/>
    </source>
</evidence>
<evidence type="ECO:0000305" key="4"/>
<name>MAL1_DROVI</name>
<gene>
    <name type="primary">Mal-B1</name>
    <name type="synonym">Mav1</name>
    <name type="ORF">GJ22501</name>
</gene>
<sequence length="632" mass="72991">MEEGERWREGHVYQRSSETRKPTNYDRPDSPVTHYVSDTHIVGTLMDELEVETGLITTILIATFNEMRRSHKPNELDDNINWWRHEVFYQIYPRSFKDSDGDGIGDLKGITSKLQYFVDTGITAIWLSPIYKSPMVDFGYDISDYRDIQPEYGTLEDFDALIAKANQLGIKVILDFVPNHSSDEHEWFKKSAAREPGYEDFYVWEDGIPGDNETRLPPNNWVSVFSGSAWQWHEERQQFYLRQFTKGQPDLNYRNPAVVQAMDEVLLYWLQKGVAGFRIDAVIYIYEDEQLRDEPLSGSTSDPNSVDYLEHIYTRNLPECYGLIQHWRQLLDNYTADNPGPVRIMMTEGYADLSLLMNYYEDEDGVQGAHFPFNFDFITELNANSAAPDFVYFIQRWLTYMPPGHSANWVMGNHDNPRVASRYGVGTVDAMNMLMMTLPGIGITYYGEELGMVDYRDISWNDTVDQPACDAGLDNYKWVSRDPERTPMQWSDEKNAGFSTGDSTWLPVHPNYQELNLLTQQEATYSHYKVYQSLIKLRQSRVLRDGSFTAQALNRNVFAIKRELRGQPTLLTVINVSNRTQQVDVSNFIDLPNRLTLLVVGVCSQHRVSERLKPAEVKLSPHEGLVIQLKAR</sequence>
<keyword id="KW-0325">Glycoprotein</keyword>
<keyword id="KW-0326">Glycosidase</keyword>
<keyword id="KW-0378">Hydrolase</keyword>
<keyword id="KW-1185">Reference proteome</keyword>
<keyword id="KW-0732">Signal</keyword>
<organism>
    <name type="scientific">Drosophila virilis</name>
    <name type="common">Fruit fly</name>
    <dbReference type="NCBI Taxonomy" id="7244"/>
    <lineage>
        <taxon>Eukaryota</taxon>
        <taxon>Metazoa</taxon>
        <taxon>Ecdysozoa</taxon>
        <taxon>Arthropoda</taxon>
        <taxon>Hexapoda</taxon>
        <taxon>Insecta</taxon>
        <taxon>Pterygota</taxon>
        <taxon>Neoptera</taxon>
        <taxon>Endopterygota</taxon>
        <taxon>Diptera</taxon>
        <taxon>Brachycera</taxon>
        <taxon>Muscomorpha</taxon>
        <taxon>Ephydroidea</taxon>
        <taxon>Drosophilidae</taxon>
        <taxon>Drosophila</taxon>
    </lineage>
</organism>
<comment type="catalytic activity">
    <reaction>
        <text>Hydrolysis of terminal, non-reducing (1-&gt;4)-linked alpha-D-glucose residues with release of alpha-D-glucose.</text>
        <dbReference type="EC" id="3.2.1.20"/>
    </reaction>
</comment>
<comment type="similarity">
    <text evidence="4">Belongs to the glycosyl hydrolase 13 family.</text>
</comment>
<comment type="sequence caution" evidence="4">
    <conflict type="miscellaneous discrepancy">
        <sequence resource="EMBL-CDS" id="AAB82327"/>
    </conflict>
    <text>Several sequencing errors.</text>
</comment>
<protein>
    <recommendedName>
        <fullName>Maltase 1</fullName>
        <ecNumber>3.2.1.20</ecNumber>
    </recommendedName>
</protein>
<accession>O16098</accession>
<accession>B4LQJ1</accession>
<reference key="1">
    <citation type="journal article" date="2007" name="Nature">
        <title>Evolution of genes and genomes on the Drosophila phylogeny.</title>
        <authorList>
            <consortium name="Drosophila 12 genomes consortium"/>
        </authorList>
    </citation>
    <scope>NUCLEOTIDE SEQUENCE [LARGE SCALE GENOMIC DNA]</scope>
    <source>
        <strain>Tucson 15010-1051.87</strain>
    </source>
</reference>
<reference key="2">
    <citation type="journal article" date="1997" name="Mol. Biol. Evol.">
        <title>The evolution of small gene clusters: evidence for an independent origin of the maltase gene cluster in Drosophila virilis and Drosophila melanogaster.</title>
        <authorList>
            <person name="Vieira C.P."/>
            <person name="Vieira J."/>
            <person name="Hartl D.L."/>
        </authorList>
    </citation>
    <scope>NUCLEOTIDE SEQUENCE [GENOMIC DNA] OF 71-632</scope>
    <source>
        <strain>9</strain>
    </source>
</reference>
<dbReference type="EC" id="3.2.1.20"/>
<dbReference type="EMBL" id="CH940649">
    <property type="protein sequence ID" value="EDW64448.1"/>
    <property type="molecule type" value="Genomic_DNA"/>
</dbReference>
<dbReference type="EMBL" id="AF006573">
    <property type="protein sequence ID" value="AAB82327.1"/>
    <property type="status" value="ALT_SEQ"/>
    <property type="molecule type" value="Genomic_DNA"/>
</dbReference>
<dbReference type="RefSeq" id="XP_002052293.2">
    <property type="nucleotide sequence ID" value="XM_002052257.2"/>
</dbReference>
<dbReference type="SMR" id="O16098"/>
<dbReference type="FunCoup" id="O16098">
    <property type="interactions" value="51"/>
</dbReference>
<dbReference type="STRING" id="7244.O16098"/>
<dbReference type="CAZy" id="GH13">
    <property type="family name" value="Glycoside Hydrolase Family 13"/>
</dbReference>
<dbReference type="GlyCosmos" id="O16098">
    <property type="glycosylation" value="6 sites, No reported glycans"/>
</dbReference>
<dbReference type="EnsemblMetazoa" id="FBtr0439930">
    <property type="protein sequence ID" value="FBpp0396571"/>
    <property type="gene ID" value="FBgn0022839"/>
</dbReference>
<dbReference type="EnsemblMetazoa" id="XM_002052257.3">
    <property type="protein sequence ID" value="XP_002052293.2"/>
    <property type="gene ID" value="LOC6627887"/>
</dbReference>
<dbReference type="GeneID" id="6627887"/>
<dbReference type="KEGG" id="dvi:6627887"/>
<dbReference type="CTD" id="34597"/>
<dbReference type="eggNOG" id="KOG0471">
    <property type="taxonomic scope" value="Eukaryota"/>
</dbReference>
<dbReference type="HOGENOM" id="CLU_006462_8_3_1"/>
<dbReference type="InParanoid" id="O16098"/>
<dbReference type="OMA" id="HATRFAN"/>
<dbReference type="OrthoDB" id="1740265at2759"/>
<dbReference type="PhylomeDB" id="O16098"/>
<dbReference type="Proteomes" id="UP000008792">
    <property type="component" value="Unassembled WGS sequence"/>
</dbReference>
<dbReference type="GO" id="GO:0004558">
    <property type="term" value="F:alpha-1,4-glucosidase activity"/>
    <property type="evidence" value="ECO:0007669"/>
    <property type="project" value="UniProtKB-EC"/>
</dbReference>
<dbReference type="GO" id="GO:0005975">
    <property type="term" value="P:carbohydrate metabolic process"/>
    <property type="evidence" value="ECO:0007669"/>
    <property type="project" value="InterPro"/>
</dbReference>
<dbReference type="CDD" id="cd11328">
    <property type="entry name" value="AmyAc_maltase"/>
    <property type="match status" value="1"/>
</dbReference>
<dbReference type="FunFam" id="3.90.400.10:FF:000001">
    <property type="entry name" value="Maltase A3, isoform A"/>
    <property type="match status" value="1"/>
</dbReference>
<dbReference type="Gene3D" id="3.20.20.80">
    <property type="entry name" value="Glycosidases"/>
    <property type="match status" value="1"/>
</dbReference>
<dbReference type="Gene3D" id="2.60.40.1180">
    <property type="entry name" value="Golgi alpha-mannosidase II"/>
    <property type="match status" value="1"/>
</dbReference>
<dbReference type="Gene3D" id="3.90.400.10">
    <property type="entry name" value="Oligo-1,6-glucosidase, Domain 2"/>
    <property type="match status" value="1"/>
</dbReference>
<dbReference type="InterPro" id="IPR006047">
    <property type="entry name" value="Glyco_hydro_13_cat_dom"/>
</dbReference>
<dbReference type="InterPro" id="IPR013780">
    <property type="entry name" value="Glyco_hydro_b"/>
</dbReference>
<dbReference type="InterPro" id="IPR017853">
    <property type="entry name" value="Glycoside_hydrolase_SF"/>
</dbReference>
<dbReference type="InterPro" id="IPR045857">
    <property type="entry name" value="O16G_dom_2"/>
</dbReference>
<dbReference type="PANTHER" id="PTHR10357">
    <property type="entry name" value="ALPHA-AMYLASE FAMILY MEMBER"/>
    <property type="match status" value="1"/>
</dbReference>
<dbReference type="PANTHER" id="PTHR10357:SF179">
    <property type="entry name" value="NEUTRAL AND BASIC AMINO ACID TRANSPORT PROTEIN RBAT"/>
    <property type="match status" value="1"/>
</dbReference>
<dbReference type="Pfam" id="PF00128">
    <property type="entry name" value="Alpha-amylase"/>
    <property type="match status" value="1"/>
</dbReference>
<dbReference type="SMART" id="SM00642">
    <property type="entry name" value="Aamy"/>
    <property type="match status" value="1"/>
</dbReference>
<dbReference type="SUPFAM" id="SSF51445">
    <property type="entry name" value="(Trans)glycosidases"/>
    <property type="match status" value="1"/>
</dbReference>
<feature type="signal peptide" evidence="2">
    <location>
        <begin position="1"/>
        <end status="unknown"/>
    </location>
</feature>
<feature type="chain" id="PRO_0000001449" description="Maltase 1">
    <location>
        <begin status="unknown"/>
        <end position="632"/>
    </location>
</feature>
<feature type="region of interest" description="Disordered" evidence="3">
    <location>
        <begin position="1"/>
        <end position="30"/>
    </location>
</feature>
<feature type="compositionally biased region" description="Basic and acidic residues" evidence="3">
    <location>
        <begin position="1"/>
        <end position="29"/>
    </location>
</feature>
<feature type="active site" description="Nucleophile" evidence="1">
    <location>
        <position position="280"/>
    </location>
</feature>
<feature type="active site" description="Proton donor" evidence="1">
    <location>
        <position position="348"/>
    </location>
</feature>
<feature type="site" description="Transition state stabilizer" evidence="1">
    <location>
        <position position="415"/>
    </location>
</feature>
<feature type="glycosylation site" description="N-linked (GlcNAc...) asparagine" evidence="2">
    <location>
        <position position="179"/>
    </location>
</feature>
<feature type="glycosylation site" description="N-linked (GlcNAc...) asparagine" evidence="2">
    <location>
        <position position="212"/>
    </location>
</feature>
<feature type="glycosylation site" description="N-linked (GlcNAc...) asparagine" evidence="2">
    <location>
        <position position="333"/>
    </location>
</feature>
<feature type="glycosylation site" description="N-linked (GlcNAc...) asparagine" evidence="2">
    <location>
        <position position="461"/>
    </location>
</feature>
<feature type="glycosylation site" description="N-linked (GlcNAc...) asparagine" evidence="2">
    <location>
        <position position="575"/>
    </location>
</feature>
<feature type="glycosylation site" description="N-linked (GlcNAc...) asparagine" evidence="2">
    <location>
        <position position="578"/>
    </location>
</feature>